<proteinExistence type="inferred from homology"/>
<gene>
    <name evidence="1" type="primary">thrS</name>
    <name type="ordered locus">AZOSEA04640</name>
    <name type="ORF">ebA871</name>
</gene>
<sequence>MPNITLPDGSVRSFDHPVTVSEVASSIGAGLAKAALAGKVDGRLVDLSYRIEADTPLAIVTEKGDEGLDVIRHSTAHLLAHAVKELFPEAQVTIGPVIENGFYYDFAYKRPFTPEDLEKIEKRMAELARREIPVSREVWPRDKAVEFFKSQGEHYKAEIIASIPQAEDVSLYRQGDFIDLCRGPHVPSTGKLKVFKLTKVAGAYWRGDSKNEMLQRIYGTAWAKKDDLENYLHMLEEAEKRDHRKLGRLLDLFHIQEEAPGMVFWHAKGWTLWQQVEQYMRRTILDNGYQEVKTPQIVDRSLWEKSGHWDMYSELMFTTQSEKRDYAVKPMNCPCHIQIFNQGLKSYRDLPLRMAEFGSCHRNEPSGALHGIMRVRNFVQDDAHIFCADEQVQTEAAAFIELLQKVYADFGFTEILIKLSTRPDKRVGTDDQWDAAEAALAAALDAQGLAYDLQPGEGAFYGPKIEFSLKDCLNRVWQCGTLQLDFNLPVRLGAEYVAEDNAKHYPVMLHRAILGSLERFIGILIEHYAGALPLWLAPVHAVVLNISEGQTDYATEVARRLKQAGFRVEADLRNEKINYKIREHSVHKLPYQIVIGEKEKAAGVVAVRARGGQDLGQMPLDTLIERWQREIEARSGSI</sequence>
<feature type="chain" id="PRO_0000100934" description="Threonine--tRNA ligase">
    <location>
        <begin position="1"/>
        <end position="638"/>
    </location>
</feature>
<feature type="domain" description="TGS" evidence="2">
    <location>
        <begin position="1"/>
        <end position="61"/>
    </location>
</feature>
<feature type="region of interest" description="Catalytic" evidence="1">
    <location>
        <begin position="242"/>
        <end position="533"/>
    </location>
</feature>
<feature type="binding site" evidence="1">
    <location>
        <position position="333"/>
    </location>
    <ligand>
        <name>Zn(2+)</name>
        <dbReference type="ChEBI" id="CHEBI:29105"/>
    </ligand>
</feature>
<feature type="binding site" evidence="1">
    <location>
        <position position="384"/>
    </location>
    <ligand>
        <name>Zn(2+)</name>
        <dbReference type="ChEBI" id="CHEBI:29105"/>
    </ligand>
</feature>
<feature type="binding site" evidence="1">
    <location>
        <position position="510"/>
    </location>
    <ligand>
        <name>Zn(2+)</name>
        <dbReference type="ChEBI" id="CHEBI:29105"/>
    </ligand>
</feature>
<keyword id="KW-0030">Aminoacyl-tRNA synthetase</keyword>
<keyword id="KW-0067">ATP-binding</keyword>
<keyword id="KW-0963">Cytoplasm</keyword>
<keyword id="KW-0436">Ligase</keyword>
<keyword id="KW-0479">Metal-binding</keyword>
<keyword id="KW-0547">Nucleotide-binding</keyword>
<keyword id="KW-0648">Protein biosynthesis</keyword>
<keyword id="KW-1185">Reference proteome</keyword>
<keyword id="KW-0694">RNA-binding</keyword>
<keyword id="KW-0820">tRNA-binding</keyword>
<keyword id="KW-0862">Zinc</keyword>
<reference key="1">
    <citation type="journal article" date="2005" name="Arch. Microbiol.">
        <title>The genome sequence of an anaerobic aromatic-degrading denitrifying bacterium, strain EbN1.</title>
        <authorList>
            <person name="Rabus R."/>
            <person name="Kube M."/>
            <person name="Heider J."/>
            <person name="Beck A."/>
            <person name="Heitmann K."/>
            <person name="Widdel F."/>
            <person name="Reinhardt R."/>
        </authorList>
    </citation>
    <scope>NUCLEOTIDE SEQUENCE [LARGE SCALE GENOMIC DNA]</scope>
    <source>
        <strain>DSM 19018 / LMG 30748 / EbN1</strain>
    </source>
</reference>
<comment type="function">
    <text evidence="1">Catalyzes the attachment of threonine to tRNA(Thr) in a two-step reaction: L-threonine is first activated by ATP to form Thr-AMP and then transferred to the acceptor end of tRNA(Thr). Also edits incorrectly charged L-seryl-tRNA(Thr).</text>
</comment>
<comment type="catalytic activity">
    <reaction evidence="1">
        <text>tRNA(Thr) + L-threonine + ATP = L-threonyl-tRNA(Thr) + AMP + diphosphate + H(+)</text>
        <dbReference type="Rhea" id="RHEA:24624"/>
        <dbReference type="Rhea" id="RHEA-COMP:9670"/>
        <dbReference type="Rhea" id="RHEA-COMP:9704"/>
        <dbReference type="ChEBI" id="CHEBI:15378"/>
        <dbReference type="ChEBI" id="CHEBI:30616"/>
        <dbReference type="ChEBI" id="CHEBI:33019"/>
        <dbReference type="ChEBI" id="CHEBI:57926"/>
        <dbReference type="ChEBI" id="CHEBI:78442"/>
        <dbReference type="ChEBI" id="CHEBI:78534"/>
        <dbReference type="ChEBI" id="CHEBI:456215"/>
        <dbReference type="EC" id="6.1.1.3"/>
    </reaction>
</comment>
<comment type="cofactor">
    <cofactor evidence="1">
        <name>Zn(2+)</name>
        <dbReference type="ChEBI" id="CHEBI:29105"/>
    </cofactor>
    <text evidence="1">Binds 1 zinc ion per subunit.</text>
</comment>
<comment type="subunit">
    <text evidence="1">Homodimer.</text>
</comment>
<comment type="subcellular location">
    <subcellularLocation>
        <location evidence="1">Cytoplasm</location>
    </subcellularLocation>
</comment>
<comment type="similarity">
    <text evidence="1">Belongs to the class-II aminoacyl-tRNA synthetase family.</text>
</comment>
<name>SYT_AROAE</name>
<dbReference type="EC" id="6.1.1.3" evidence="1"/>
<dbReference type="EMBL" id="CR555306">
    <property type="protein sequence ID" value="CAI06586.1"/>
    <property type="molecule type" value="Genomic_DNA"/>
</dbReference>
<dbReference type="RefSeq" id="WP_011236317.1">
    <property type="nucleotide sequence ID" value="NC_006513.1"/>
</dbReference>
<dbReference type="SMR" id="Q5P7X5"/>
<dbReference type="STRING" id="76114.ebA871"/>
<dbReference type="KEGG" id="eba:ebA871"/>
<dbReference type="eggNOG" id="COG0441">
    <property type="taxonomic scope" value="Bacteria"/>
</dbReference>
<dbReference type="HOGENOM" id="CLU_008554_0_1_4"/>
<dbReference type="OrthoDB" id="9802304at2"/>
<dbReference type="Proteomes" id="UP000006552">
    <property type="component" value="Chromosome"/>
</dbReference>
<dbReference type="GO" id="GO:0005737">
    <property type="term" value="C:cytoplasm"/>
    <property type="evidence" value="ECO:0007669"/>
    <property type="project" value="UniProtKB-SubCell"/>
</dbReference>
<dbReference type="GO" id="GO:0005524">
    <property type="term" value="F:ATP binding"/>
    <property type="evidence" value="ECO:0007669"/>
    <property type="project" value="UniProtKB-UniRule"/>
</dbReference>
<dbReference type="GO" id="GO:0046872">
    <property type="term" value="F:metal ion binding"/>
    <property type="evidence" value="ECO:0007669"/>
    <property type="project" value="UniProtKB-KW"/>
</dbReference>
<dbReference type="GO" id="GO:0004829">
    <property type="term" value="F:threonine-tRNA ligase activity"/>
    <property type="evidence" value="ECO:0007669"/>
    <property type="project" value="UniProtKB-UniRule"/>
</dbReference>
<dbReference type="GO" id="GO:0000049">
    <property type="term" value="F:tRNA binding"/>
    <property type="evidence" value="ECO:0007669"/>
    <property type="project" value="UniProtKB-KW"/>
</dbReference>
<dbReference type="GO" id="GO:0006435">
    <property type="term" value="P:threonyl-tRNA aminoacylation"/>
    <property type="evidence" value="ECO:0007669"/>
    <property type="project" value="UniProtKB-UniRule"/>
</dbReference>
<dbReference type="CDD" id="cd01667">
    <property type="entry name" value="TGS_ThrRS"/>
    <property type="match status" value="1"/>
</dbReference>
<dbReference type="CDD" id="cd00860">
    <property type="entry name" value="ThrRS_anticodon"/>
    <property type="match status" value="1"/>
</dbReference>
<dbReference type="CDD" id="cd00771">
    <property type="entry name" value="ThrRS_core"/>
    <property type="match status" value="1"/>
</dbReference>
<dbReference type="FunFam" id="3.10.20.30:FF:000005">
    <property type="entry name" value="Threonine--tRNA ligase"/>
    <property type="match status" value="1"/>
</dbReference>
<dbReference type="FunFam" id="3.30.54.20:FF:000002">
    <property type="entry name" value="Threonine--tRNA ligase"/>
    <property type="match status" value="1"/>
</dbReference>
<dbReference type="FunFam" id="3.30.930.10:FF:000002">
    <property type="entry name" value="Threonine--tRNA ligase"/>
    <property type="match status" value="1"/>
</dbReference>
<dbReference type="FunFam" id="3.40.50.800:FF:000001">
    <property type="entry name" value="Threonine--tRNA ligase"/>
    <property type="match status" value="1"/>
</dbReference>
<dbReference type="FunFam" id="3.30.980.10:FF:000005">
    <property type="entry name" value="Threonyl-tRNA synthetase, mitochondrial"/>
    <property type="match status" value="1"/>
</dbReference>
<dbReference type="Gene3D" id="3.10.20.30">
    <property type="match status" value="1"/>
</dbReference>
<dbReference type="Gene3D" id="3.30.54.20">
    <property type="match status" value="1"/>
</dbReference>
<dbReference type="Gene3D" id="3.40.50.800">
    <property type="entry name" value="Anticodon-binding domain"/>
    <property type="match status" value="1"/>
</dbReference>
<dbReference type="Gene3D" id="3.30.930.10">
    <property type="entry name" value="Bira Bifunctional Protein, Domain 2"/>
    <property type="match status" value="1"/>
</dbReference>
<dbReference type="Gene3D" id="3.30.980.10">
    <property type="entry name" value="Threonyl-trna Synthetase, Chain A, domain 2"/>
    <property type="match status" value="1"/>
</dbReference>
<dbReference type="HAMAP" id="MF_00184">
    <property type="entry name" value="Thr_tRNA_synth"/>
    <property type="match status" value="1"/>
</dbReference>
<dbReference type="InterPro" id="IPR002314">
    <property type="entry name" value="aa-tRNA-synt_IIb"/>
</dbReference>
<dbReference type="InterPro" id="IPR006195">
    <property type="entry name" value="aa-tRNA-synth_II"/>
</dbReference>
<dbReference type="InterPro" id="IPR045864">
    <property type="entry name" value="aa-tRNA-synth_II/BPL/LPL"/>
</dbReference>
<dbReference type="InterPro" id="IPR004154">
    <property type="entry name" value="Anticodon-bd"/>
</dbReference>
<dbReference type="InterPro" id="IPR036621">
    <property type="entry name" value="Anticodon-bd_dom_sf"/>
</dbReference>
<dbReference type="InterPro" id="IPR012675">
    <property type="entry name" value="Beta-grasp_dom_sf"/>
</dbReference>
<dbReference type="InterPro" id="IPR004095">
    <property type="entry name" value="TGS"/>
</dbReference>
<dbReference type="InterPro" id="IPR012676">
    <property type="entry name" value="TGS-like"/>
</dbReference>
<dbReference type="InterPro" id="IPR002320">
    <property type="entry name" value="Thr-tRNA-ligase_IIa"/>
</dbReference>
<dbReference type="InterPro" id="IPR018163">
    <property type="entry name" value="Thr/Ala-tRNA-synth_IIc_edit"/>
</dbReference>
<dbReference type="InterPro" id="IPR047246">
    <property type="entry name" value="ThrRS_anticodon"/>
</dbReference>
<dbReference type="InterPro" id="IPR033728">
    <property type="entry name" value="ThrRS_core"/>
</dbReference>
<dbReference type="InterPro" id="IPR012947">
    <property type="entry name" value="tRNA_SAD"/>
</dbReference>
<dbReference type="NCBIfam" id="TIGR00418">
    <property type="entry name" value="thrS"/>
    <property type="match status" value="1"/>
</dbReference>
<dbReference type="PANTHER" id="PTHR11451:SF44">
    <property type="entry name" value="THREONINE--TRNA LIGASE, CHLOROPLASTIC_MITOCHONDRIAL 2"/>
    <property type="match status" value="1"/>
</dbReference>
<dbReference type="PANTHER" id="PTHR11451">
    <property type="entry name" value="THREONINE-TRNA LIGASE"/>
    <property type="match status" value="1"/>
</dbReference>
<dbReference type="Pfam" id="PF03129">
    <property type="entry name" value="HGTP_anticodon"/>
    <property type="match status" value="1"/>
</dbReference>
<dbReference type="Pfam" id="PF02824">
    <property type="entry name" value="TGS"/>
    <property type="match status" value="1"/>
</dbReference>
<dbReference type="Pfam" id="PF00587">
    <property type="entry name" value="tRNA-synt_2b"/>
    <property type="match status" value="1"/>
</dbReference>
<dbReference type="Pfam" id="PF07973">
    <property type="entry name" value="tRNA_SAD"/>
    <property type="match status" value="1"/>
</dbReference>
<dbReference type="PRINTS" id="PR01047">
    <property type="entry name" value="TRNASYNTHTHR"/>
</dbReference>
<dbReference type="SMART" id="SM00863">
    <property type="entry name" value="tRNA_SAD"/>
    <property type="match status" value="1"/>
</dbReference>
<dbReference type="SUPFAM" id="SSF52954">
    <property type="entry name" value="Class II aaRS ABD-related"/>
    <property type="match status" value="1"/>
</dbReference>
<dbReference type="SUPFAM" id="SSF55681">
    <property type="entry name" value="Class II aaRS and biotin synthetases"/>
    <property type="match status" value="1"/>
</dbReference>
<dbReference type="SUPFAM" id="SSF81271">
    <property type="entry name" value="TGS-like"/>
    <property type="match status" value="1"/>
</dbReference>
<dbReference type="SUPFAM" id="SSF55186">
    <property type="entry name" value="ThrRS/AlaRS common domain"/>
    <property type="match status" value="1"/>
</dbReference>
<dbReference type="PROSITE" id="PS50862">
    <property type="entry name" value="AA_TRNA_LIGASE_II"/>
    <property type="match status" value="1"/>
</dbReference>
<dbReference type="PROSITE" id="PS51880">
    <property type="entry name" value="TGS"/>
    <property type="match status" value="1"/>
</dbReference>
<organism>
    <name type="scientific">Aromatoleum aromaticum (strain DSM 19018 / LMG 30748 / EbN1)</name>
    <name type="common">Azoarcus sp. (strain EbN1)</name>
    <dbReference type="NCBI Taxonomy" id="76114"/>
    <lineage>
        <taxon>Bacteria</taxon>
        <taxon>Pseudomonadati</taxon>
        <taxon>Pseudomonadota</taxon>
        <taxon>Betaproteobacteria</taxon>
        <taxon>Rhodocyclales</taxon>
        <taxon>Rhodocyclaceae</taxon>
        <taxon>Aromatoleum</taxon>
    </lineage>
</organism>
<evidence type="ECO:0000255" key="1">
    <source>
        <dbReference type="HAMAP-Rule" id="MF_00184"/>
    </source>
</evidence>
<evidence type="ECO:0000255" key="2">
    <source>
        <dbReference type="PROSITE-ProRule" id="PRU01228"/>
    </source>
</evidence>
<protein>
    <recommendedName>
        <fullName evidence="1">Threonine--tRNA ligase</fullName>
        <ecNumber evidence="1">6.1.1.3</ecNumber>
    </recommendedName>
    <alternativeName>
        <fullName evidence="1">Threonyl-tRNA synthetase</fullName>
        <shortName evidence="1">ThrRS</shortName>
    </alternativeName>
</protein>
<accession>Q5P7X5</accession>